<name>MED31_ARATH</name>
<keyword id="KW-0010">Activator</keyword>
<keyword id="KW-0025">Alternative splicing</keyword>
<keyword id="KW-0539">Nucleus</keyword>
<keyword id="KW-1185">Reference proteome</keyword>
<keyword id="KW-0804">Transcription</keyword>
<keyword id="KW-0805">Transcription regulation</keyword>
<comment type="function">
    <text>Component of the Mediator complex, a coactivator involved in the regulated transcription of nearly all RNA polymerase II-dependent genes. Mediator functions as a bridge to convey information from gene-specific regulatory proteins to the basal RNA polymerase II transcription machinery. Mediator is recruited to promoters by direct interactions with regulatory proteins and serves as a scaffold for the assembly of a functional preinitiation complex with RNA polymerase II and the general transcription factors.</text>
</comment>
<comment type="subunit">
    <text evidence="2 3">Component of the Mediator complex.</text>
</comment>
<comment type="subcellular location">
    <subcellularLocation>
        <location evidence="4">Nucleus</location>
    </subcellularLocation>
</comment>
<comment type="alternative products">
    <event type="alternative splicing"/>
    <isoform>
        <id>Q8VYB1-1</id>
        <name>1</name>
        <sequence type="displayed"/>
    </isoform>
    <isoform>
        <id>Q8VYB1-2</id>
        <name>2</name>
        <sequence type="described" ref="VSP_043983"/>
    </isoform>
</comment>
<comment type="similarity">
    <text evidence="4">Belongs to the Mediator complex subunit 31 family.</text>
</comment>
<accession>Q8VYB1</accession>
<accession>F4K2N8</accession>
<organism>
    <name type="scientific">Arabidopsis thaliana</name>
    <name type="common">Mouse-ear cress</name>
    <dbReference type="NCBI Taxonomy" id="3702"/>
    <lineage>
        <taxon>Eukaryota</taxon>
        <taxon>Viridiplantae</taxon>
        <taxon>Streptophyta</taxon>
        <taxon>Embryophyta</taxon>
        <taxon>Tracheophyta</taxon>
        <taxon>Spermatophyta</taxon>
        <taxon>Magnoliopsida</taxon>
        <taxon>eudicotyledons</taxon>
        <taxon>Gunneridae</taxon>
        <taxon>Pentapetalae</taxon>
        <taxon>rosids</taxon>
        <taxon>malvids</taxon>
        <taxon>Brassicales</taxon>
        <taxon>Brassicaceae</taxon>
        <taxon>Camelineae</taxon>
        <taxon>Arabidopsis</taxon>
    </lineage>
</organism>
<evidence type="ECO:0000256" key="1">
    <source>
        <dbReference type="SAM" id="MobiDB-lite"/>
    </source>
</evidence>
<evidence type="ECO:0000269" key="2">
    <source>
    </source>
</evidence>
<evidence type="ECO:0000269" key="3">
    <source>
    </source>
</evidence>
<evidence type="ECO:0000305" key="4"/>
<proteinExistence type="evidence at protein level"/>
<reference key="1">
    <citation type="journal article" date="2000" name="Nature">
        <title>Sequence and analysis of chromosome 5 of the plant Arabidopsis thaliana.</title>
        <authorList>
            <person name="Tabata S."/>
            <person name="Kaneko T."/>
            <person name="Nakamura Y."/>
            <person name="Kotani H."/>
            <person name="Kato T."/>
            <person name="Asamizu E."/>
            <person name="Miyajima N."/>
            <person name="Sasamoto S."/>
            <person name="Kimura T."/>
            <person name="Hosouchi T."/>
            <person name="Kawashima K."/>
            <person name="Kohara M."/>
            <person name="Matsumoto M."/>
            <person name="Matsuno A."/>
            <person name="Muraki A."/>
            <person name="Nakayama S."/>
            <person name="Nakazaki N."/>
            <person name="Naruo K."/>
            <person name="Okumura S."/>
            <person name="Shinpo S."/>
            <person name="Takeuchi C."/>
            <person name="Wada T."/>
            <person name="Watanabe A."/>
            <person name="Yamada M."/>
            <person name="Yasuda M."/>
            <person name="Sato S."/>
            <person name="de la Bastide M."/>
            <person name="Huang E."/>
            <person name="Spiegel L."/>
            <person name="Gnoj L."/>
            <person name="O'Shaughnessy A."/>
            <person name="Preston R."/>
            <person name="Habermann K."/>
            <person name="Murray J."/>
            <person name="Johnson D."/>
            <person name="Rohlfing T."/>
            <person name="Nelson J."/>
            <person name="Stoneking T."/>
            <person name="Pepin K."/>
            <person name="Spieth J."/>
            <person name="Sekhon M."/>
            <person name="Armstrong J."/>
            <person name="Becker M."/>
            <person name="Belter E."/>
            <person name="Cordum H."/>
            <person name="Cordes M."/>
            <person name="Courtney L."/>
            <person name="Courtney W."/>
            <person name="Dante M."/>
            <person name="Du H."/>
            <person name="Edwards J."/>
            <person name="Fryman J."/>
            <person name="Haakensen B."/>
            <person name="Lamar E."/>
            <person name="Latreille P."/>
            <person name="Leonard S."/>
            <person name="Meyer R."/>
            <person name="Mulvaney E."/>
            <person name="Ozersky P."/>
            <person name="Riley A."/>
            <person name="Strowmatt C."/>
            <person name="Wagner-McPherson C."/>
            <person name="Wollam A."/>
            <person name="Yoakum M."/>
            <person name="Bell M."/>
            <person name="Dedhia N."/>
            <person name="Parnell L."/>
            <person name="Shah R."/>
            <person name="Rodriguez M."/>
            <person name="Hoon See L."/>
            <person name="Vil D."/>
            <person name="Baker J."/>
            <person name="Kirchoff K."/>
            <person name="Toth K."/>
            <person name="King L."/>
            <person name="Bahret A."/>
            <person name="Miller B."/>
            <person name="Marra M.A."/>
            <person name="Martienssen R."/>
            <person name="McCombie W.R."/>
            <person name="Wilson R.K."/>
            <person name="Murphy G."/>
            <person name="Bancroft I."/>
            <person name="Volckaert G."/>
            <person name="Wambutt R."/>
            <person name="Duesterhoeft A."/>
            <person name="Stiekema W."/>
            <person name="Pohl T."/>
            <person name="Entian K.-D."/>
            <person name="Terryn N."/>
            <person name="Hartley N."/>
            <person name="Bent E."/>
            <person name="Johnson S."/>
            <person name="Langham S.-A."/>
            <person name="McCullagh B."/>
            <person name="Robben J."/>
            <person name="Grymonprez B."/>
            <person name="Zimmermann W."/>
            <person name="Ramsperger U."/>
            <person name="Wedler H."/>
            <person name="Balke K."/>
            <person name="Wedler E."/>
            <person name="Peters S."/>
            <person name="van Staveren M."/>
            <person name="Dirkse W."/>
            <person name="Mooijman P."/>
            <person name="Klein Lankhorst R."/>
            <person name="Weitzenegger T."/>
            <person name="Bothe G."/>
            <person name="Rose M."/>
            <person name="Hauf J."/>
            <person name="Berneiser S."/>
            <person name="Hempel S."/>
            <person name="Feldpausch M."/>
            <person name="Lamberth S."/>
            <person name="Villarroel R."/>
            <person name="Gielen J."/>
            <person name="Ardiles W."/>
            <person name="Bents O."/>
            <person name="Lemcke K."/>
            <person name="Kolesov G."/>
            <person name="Mayer K.F.X."/>
            <person name="Rudd S."/>
            <person name="Schoof H."/>
            <person name="Schueller C."/>
            <person name="Zaccaria P."/>
            <person name="Mewes H.-W."/>
            <person name="Bevan M."/>
            <person name="Fransz P.F."/>
        </authorList>
    </citation>
    <scope>NUCLEOTIDE SEQUENCE [LARGE SCALE GENOMIC DNA]</scope>
    <source>
        <strain>cv. Columbia</strain>
    </source>
</reference>
<reference key="2">
    <citation type="journal article" date="2017" name="Plant J.">
        <title>Araport11: a complete reannotation of the Arabidopsis thaliana reference genome.</title>
        <authorList>
            <person name="Cheng C.Y."/>
            <person name="Krishnakumar V."/>
            <person name="Chan A.P."/>
            <person name="Thibaud-Nissen F."/>
            <person name="Schobel S."/>
            <person name="Town C.D."/>
        </authorList>
    </citation>
    <scope>GENOME REANNOTATION</scope>
    <source>
        <strain>cv. Columbia</strain>
    </source>
</reference>
<reference key="3">
    <citation type="journal article" date="2003" name="Science">
        <title>Empirical analysis of transcriptional activity in the Arabidopsis genome.</title>
        <authorList>
            <person name="Yamada K."/>
            <person name="Lim J."/>
            <person name="Dale J.M."/>
            <person name="Chen H."/>
            <person name="Shinn P."/>
            <person name="Palm C.J."/>
            <person name="Southwick A.M."/>
            <person name="Wu H.C."/>
            <person name="Kim C.J."/>
            <person name="Nguyen M."/>
            <person name="Pham P.K."/>
            <person name="Cheuk R.F."/>
            <person name="Karlin-Newmann G."/>
            <person name="Liu S.X."/>
            <person name="Lam B."/>
            <person name="Sakano H."/>
            <person name="Wu T."/>
            <person name="Yu G."/>
            <person name="Miranda M."/>
            <person name="Quach H.L."/>
            <person name="Tripp M."/>
            <person name="Chang C.H."/>
            <person name="Lee J.M."/>
            <person name="Toriumi M.J."/>
            <person name="Chan M.M."/>
            <person name="Tang C.C."/>
            <person name="Onodera C.S."/>
            <person name="Deng J.M."/>
            <person name="Akiyama K."/>
            <person name="Ansari Y."/>
            <person name="Arakawa T."/>
            <person name="Banh J."/>
            <person name="Banno F."/>
            <person name="Bowser L."/>
            <person name="Brooks S.Y."/>
            <person name="Carninci P."/>
            <person name="Chao Q."/>
            <person name="Choy N."/>
            <person name="Enju A."/>
            <person name="Goldsmith A.D."/>
            <person name="Gurjal M."/>
            <person name="Hansen N.F."/>
            <person name="Hayashizaki Y."/>
            <person name="Johnson-Hopson C."/>
            <person name="Hsuan V.W."/>
            <person name="Iida K."/>
            <person name="Karnes M."/>
            <person name="Khan S."/>
            <person name="Koesema E."/>
            <person name="Ishida J."/>
            <person name="Jiang P.X."/>
            <person name="Jones T."/>
            <person name="Kawai J."/>
            <person name="Kamiya A."/>
            <person name="Meyers C."/>
            <person name="Nakajima M."/>
            <person name="Narusaka M."/>
            <person name="Seki M."/>
            <person name="Sakurai T."/>
            <person name="Satou M."/>
            <person name="Tamse R."/>
            <person name="Vaysberg M."/>
            <person name="Wallender E.K."/>
            <person name="Wong C."/>
            <person name="Yamamura Y."/>
            <person name="Yuan S."/>
            <person name="Shinozaki K."/>
            <person name="Davis R.W."/>
            <person name="Theologis A."/>
            <person name="Ecker J.R."/>
        </authorList>
    </citation>
    <scope>NUCLEOTIDE SEQUENCE [LARGE SCALE MRNA] (ISOFORM 1)</scope>
    <source>
        <strain>cv. Columbia</strain>
    </source>
</reference>
<reference key="4">
    <citation type="journal article" date="2007" name="Mol. Cell">
        <title>Purification of a plant mediator from Arabidopsis thaliana identifies PFT1 as the Med25 subunit.</title>
        <authorList>
            <person name="Baeckstroem S."/>
            <person name="Elfving N."/>
            <person name="Nilsson R."/>
            <person name="Wingsle G."/>
            <person name="Bjoerklund S."/>
        </authorList>
    </citation>
    <scope>IDENTIFICATION BY MASS SPECTROMETRY</scope>
    <scope>SUBUNIT</scope>
    <scope>NOMENCLATURE</scope>
</reference>
<reference key="5">
    <citation type="journal article" date="2011" name="Plant Physiol.">
        <title>The Mediator complex in plants: structure, phylogeny, and expression profiling of representative genes in a dicot (Arabidopsis) and a monocot (rice) during reproduction and abiotic stress.</title>
        <authorList>
            <person name="Mathur S."/>
            <person name="Vyas S."/>
            <person name="Kapoor S."/>
            <person name="Tyagi A.K."/>
        </authorList>
    </citation>
    <scope>IDENTIFICATION</scope>
    <scope>SUBUNIT</scope>
    <scope>NOMENCLATURE</scope>
</reference>
<gene>
    <name type="primary">MED31</name>
    <name type="synonym">MED31_1</name>
    <name type="ordered locus">At5g19910</name>
    <name type="ORF">F28I16.60</name>
</gene>
<sequence length="196" mass="22819">MASPEEMGDDASEIPSPPKNTYKDPDGGRQRFLLELEFIQCLANPTYIHYLAQNRYFEDEAFIGYLKYLQYWQRPEYIKFIMYPHCLYFLELLQNPNFRTAMAHPANKELAHRQQFYYWKNYRNNRLKHILPRPLPEPVPPQPPVAPSTSLPPAPSATAALSPALSPMQYNNMLSKNDTRNMGATGIDRRKRKKGI</sequence>
<protein>
    <recommendedName>
        <fullName>Mediator of RNA polymerase II transcription subunit 31</fullName>
    </recommendedName>
    <alternativeName>
        <fullName>Mediator complex subunit 31</fullName>
    </alternativeName>
    <alternativeName>
        <fullName>Mediator complex subunit SOH1</fullName>
    </alternativeName>
</protein>
<dbReference type="EMBL" id="AF296836">
    <property type="status" value="NOT_ANNOTATED_CDS"/>
    <property type="molecule type" value="Genomic_DNA"/>
</dbReference>
<dbReference type="EMBL" id="CP002688">
    <property type="protein sequence ID" value="AED92764.1"/>
    <property type="molecule type" value="Genomic_DNA"/>
</dbReference>
<dbReference type="EMBL" id="CP002688">
    <property type="protein sequence ID" value="AED92765.1"/>
    <property type="molecule type" value="Genomic_DNA"/>
</dbReference>
<dbReference type="EMBL" id="AY072222">
    <property type="protein sequence ID" value="AAL60043.1"/>
    <property type="molecule type" value="mRNA"/>
</dbReference>
<dbReference type="EMBL" id="BT002744">
    <property type="protein sequence ID" value="AAO22573.1"/>
    <property type="molecule type" value="mRNA"/>
</dbReference>
<dbReference type="RefSeq" id="NP_001190342.1">
    <molecule id="Q8VYB1-2"/>
    <property type="nucleotide sequence ID" value="NM_001203413.1"/>
</dbReference>
<dbReference type="RefSeq" id="NP_197491.2">
    <molecule id="Q8VYB1-1"/>
    <property type="nucleotide sequence ID" value="NM_121998.5"/>
</dbReference>
<dbReference type="SMR" id="Q8VYB1"/>
<dbReference type="BioGRID" id="17389">
    <property type="interactions" value="1"/>
</dbReference>
<dbReference type="FunCoup" id="Q8VYB1">
    <property type="interactions" value="3511"/>
</dbReference>
<dbReference type="IntAct" id="Q8VYB1">
    <property type="interactions" value="6"/>
</dbReference>
<dbReference type="STRING" id="3702.Q8VYB1"/>
<dbReference type="ProteomicsDB" id="228843">
    <molecule id="Q8VYB1-1"/>
</dbReference>
<dbReference type="EnsemblPlants" id="AT5G19910.1">
    <molecule id="Q8VYB1-1"/>
    <property type="protein sequence ID" value="AT5G19910.1"/>
    <property type="gene ID" value="AT5G19910"/>
</dbReference>
<dbReference type="EnsemblPlants" id="AT5G19910.2">
    <molecule id="Q8VYB1-2"/>
    <property type="protein sequence ID" value="AT5G19910.2"/>
    <property type="gene ID" value="AT5G19910"/>
</dbReference>
<dbReference type="GeneID" id="832113"/>
<dbReference type="Gramene" id="AT5G19910.1">
    <molecule id="Q8VYB1-1"/>
    <property type="protein sequence ID" value="AT5G19910.1"/>
    <property type="gene ID" value="AT5G19910"/>
</dbReference>
<dbReference type="Gramene" id="AT5G19910.2">
    <molecule id="Q8VYB1-2"/>
    <property type="protein sequence ID" value="AT5G19910.2"/>
    <property type="gene ID" value="AT5G19910"/>
</dbReference>
<dbReference type="KEGG" id="ath:AT5G19910"/>
<dbReference type="Araport" id="AT5G19910"/>
<dbReference type="TAIR" id="AT5G19910">
    <property type="gene designation" value="MED31"/>
</dbReference>
<dbReference type="InParanoid" id="Q8VYB1"/>
<dbReference type="OMA" id="PSPMQYS"/>
<dbReference type="PhylomeDB" id="Q8VYB1"/>
<dbReference type="PRO" id="PR:Q8VYB1"/>
<dbReference type="Proteomes" id="UP000006548">
    <property type="component" value="Chromosome 5"/>
</dbReference>
<dbReference type="ExpressionAtlas" id="Q8VYB1">
    <property type="expression patterns" value="baseline and differential"/>
</dbReference>
<dbReference type="GO" id="GO:0016592">
    <property type="term" value="C:mediator complex"/>
    <property type="evidence" value="ECO:0000314"/>
    <property type="project" value="UniProtKB"/>
</dbReference>
<dbReference type="GO" id="GO:0003712">
    <property type="term" value="F:transcription coregulator activity"/>
    <property type="evidence" value="ECO:0007669"/>
    <property type="project" value="InterPro"/>
</dbReference>
<dbReference type="GO" id="GO:0006355">
    <property type="term" value="P:regulation of DNA-templated transcription"/>
    <property type="evidence" value="ECO:0007669"/>
    <property type="project" value="InterPro"/>
</dbReference>
<dbReference type="FunFam" id="1.10.10.1340:FF:000001">
    <property type="entry name" value="Mediator of RNA polymerase II transcription subunit 31"/>
    <property type="match status" value="1"/>
</dbReference>
<dbReference type="Gene3D" id="1.10.10.1340">
    <property type="entry name" value="Mediator of RNA polymerase II, submodule Med31 (Soh1)"/>
    <property type="match status" value="1"/>
</dbReference>
<dbReference type="InterPro" id="IPR038089">
    <property type="entry name" value="Med31_sf"/>
</dbReference>
<dbReference type="InterPro" id="IPR008831">
    <property type="entry name" value="Mediator_Med31"/>
</dbReference>
<dbReference type="PANTHER" id="PTHR13186">
    <property type="entry name" value="MEDIATOR OF RNA POLYMERASE II TRANSCRIPTION SUBUNIT 31"/>
    <property type="match status" value="1"/>
</dbReference>
<dbReference type="Pfam" id="PF05669">
    <property type="entry name" value="Med31"/>
    <property type="match status" value="1"/>
</dbReference>
<feature type="chain" id="PRO_0000212532" description="Mediator of RNA polymerase II transcription subunit 31">
    <location>
        <begin position="1"/>
        <end position="196"/>
    </location>
</feature>
<feature type="region of interest" description="Disordered" evidence="1">
    <location>
        <begin position="1"/>
        <end position="24"/>
    </location>
</feature>
<feature type="region of interest" description="Disordered" evidence="1">
    <location>
        <begin position="133"/>
        <end position="196"/>
    </location>
</feature>
<feature type="compositionally biased region" description="Acidic residues" evidence="1">
    <location>
        <begin position="1"/>
        <end position="12"/>
    </location>
</feature>
<feature type="compositionally biased region" description="Pro residues" evidence="1">
    <location>
        <begin position="133"/>
        <end position="155"/>
    </location>
</feature>
<feature type="compositionally biased region" description="Low complexity" evidence="1">
    <location>
        <begin position="156"/>
        <end position="167"/>
    </location>
</feature>
<feature type="compositionally biased region" description="Polar residues" evidence="1">
    <location>
        <begin position="168"/>
        <end position="182"/>
    </location>
</feature>
<feature type="splice variant" id="VSP_043983" description="In isoform 2." evidence="4">
    <original>K</original>
    <variation>KWFKMLGYWCFWNVFWGLVEFRVSLVQNLAY</variation>
    <location>
        <position position="108"/>
    </location>
</feature>